<accession>O67669</accession>
<reference key="1">
    <citation type="journal article" date="1998" name="Nature">
        <title>The complete genome of the hyperthermophilic bacterium Aquifex aeolicus.</title>
        <authorList>
            <person name="Deckert G."/>
            <person name="Warren P.V."/>
            <person name="Gaasterland T."/>
            <person name="Young W.G."/>
            <person name="Lenox A.L."/>
            <person name="Graham D.E."/>
            <person name="Overbeek R."/>
            <person name="Snead M.A."/>
            <person name="Keller M."/>
            <person name="Aujay M."/>
            <person name="Huber R."/>
            <person name="Feldman R.A."/>
            <person name="Short J.M."/>
            <person name="Olsen G.J."/>
            <person name="Swanson R.V."/>
        </authorList>
    </citation>
    <scope>NUCLEOTIDE SEQUENCE [LARGE SCALE GENOMIC DNA]</scope>
    <source>
        <strain>VF5</strain>
    </source>
</reference>
<dbReference type="EMBL" id="AE000657">
    <property type="protein sequence ID" value="AAC07640.1"/>
    <property type="molecule type" value="Genomic_DNA"/>
</dbReference>
<dbReference type="PIR" id="C70455">
    <property type="entry name" value="C70455"/>
</dbReference>
<dbReference type="RefSeq" id="NP_214235.1">
    <property type="nucleotide sequence ID" value="NC_000918.1"/>
</dbReference>
<dbReference type="RefSeq" id="WP_010881172.1">
    <property type="nucleotide sequence ID" value="NC_000918.1"/>
</dbReference>
<dbReference type="SMR" id="O67669"/>
<dbReference type="STRING" id="224324.aq_1800"/>
<dbReference type="EnsemblBacteria" id="AAC07640">
    <property type="protein sequence ID" value="AAC07640"/>
    <property type="gene ID" value="aq_1800"/>
</dbReference>
<dbReference type="KEGG" id="aae:aq_1800"/>
<dbReference type="eggNOG" id="COG3439">
    <property type="taxonomic scope" value="Bacteria"/>
</dbReference>
<dbReference type="HOGENOM" id="CLU_1792469_0_0_0"/>
<dbReference type="InParanoid" id="O67669"/>
<dbReference type="OrthoDB" id="9783833at2"/>
<dbReference type="Proteomes" id="UP000000798">
    <property type="component" value="Chromosome"/>
</dbReference>
<dbReference type="CDD" id="cd14797">
    <property type="entry name" value="DUF302"/>
    <property type="match status" value="1"/>
</dbReference>
<dbReference type="Gene3D" id="3.30.310.70">
    <property type="entry name" value="TT1751-like domain"/>
    <property type="match status" value="1"/>
</dbReference>
<dbReference type="InterPro" id="IPR005180">
    <property type="entry name" value="DUF302"/>
</dbReference>
<dbReference type="InterPro" id="IPR035923">
    <property type="entry name" value="TT1751-like_sf"/>
</dbReference>
<dbReference type="InterPro" id="IPR016796">
    <property type="entry name" value="UCP021774"/>
</dbReference>
<dbReference type="PANTHER" id="PTHR38342">
    <property type="entry name" value="SLR5037 PROTEIN"/>
    <property type="match status" value="1"/>
</dbReference>
<dbReference type="PANTHER" id="PTHR38342:SF1">
    <property type="entry name" value="SLR5037 PROTEIN"/>
    <property type="match status" value="1"/>
</dbReference>
<dbReference type="Pfam" id="PF03625">
    <property type="entry name" value="DUF302"/>
    <property type="match status" value="1"/>
</dbReference>
<dbReference type="PIRSF" id="PIRSF021774">
    <property type="entry name" value="UCP021774"/>
    <property type="match status" value="1"/>
</dbReference>
<dbReference type="SUPFAM" id="SSF103247">
    <property type="entry name" value="TT1751-like"/>
    <property type="match status" value="1"/>
</dbReference>
<organism>
    <name type="scientific">Aquifex aeolicus (strain VF5)</name>
    <dbReference type="NCBI Taxonomy" id="224324"/>
    <lineage>
        <taxon>Bacteria</taxon>
        <taxon>Pseudomonadati</taxon>
        <taxon>Aquificota</taxon>
        <taxon>Aquificia</taxon>
        <taxon>Aquificales</taxon>
        <taxon>Aquificaceae</taxon>
        <taxon>Aquifex</taxon>
    </lineage>
</organism>
<keyword id="KW-1185">Reference proteome</keyword>
<keyword id="KW-0732">Signal</keyword>
<sequence>MRKFLIVLLLPLLVLAQEKMLYKEKIEGIPYEDVKILLKTALDGKNMNVLAVQDVSQKPRMTVFYVCNLSYGEKILRTFPEFGALAPCRIYILEKEDGSVEVGYINIPNLVKGFRKYLTPQAQEVFLQADKDIKEAIKEVKGGF</sequence>
<name>Y1800_AQUAE</name>
<gene>
    <name type="ordered locus">aq_1800</name>
</gene>
<evidence type="ECO:0000255" key="1"/>
<proteinExistence type="inferred from homology"/>
<protein>
    <recommendedName>
        <fullName>Uncharacterized protein aq_1800</fullName>
    </recommendedName>
</protein>
<feature type="signal peptide" evidence="1">
    <location>
        <begin position="1"/>
        <end position="16"/>
    </location>
</feature>
<feature type="chain" id="PRO_0000013627" description="Uncharacterized protein aq_1800">
    <location>
        <begin position="17"/>
        <end position="144"/>
    </location>
</feature>